<keyword id="KW-0407">Ion channel</keyword>
<keyword id="KW-0406">Ion transport</keyword>
<keyword id="KW-0472">Membrane</keyword>
<keyword id="KW-1185">Reference proteome</keyword>
<keyword id="KW-0812">Transmembrane</keyword>
<keyword id="KW-1133">Transmembrane helix</keyword>
<keyword id="KW-0813">Transport</keyword>
<organism evidence="7">
    <name type="scientific">Caenorhabditis elegans</name>
    <dbReference type="NCBI Taxonomy" id="6239"/>
    <lineage>
        <taxon>Eukaryota</taxon>
        <taxon>Metazoa</taxon>
        <taxon>Ecdysozoa</taxon>
        <taxon>Nematoda</taxon>
        <taxon>Chromadorea</taxon>
        <taxon>Rhabditida</taxon>
        <taxon>Rhabditina</taxon>
        <taxon>Rhabditomorpha</taxon>
        <taxon>Rhabditoidea</taxon>
        <taxon>Rhabditidae</taxon>
        <taxon>Peloderinae</taxon>
        <taxon>Caenorhabditis</taxon>
    </lineage>
</organism>
<feature type="chain" id="PRO_0000215361" description="Transient receptor potential channel">
    <location>
        <begin position="1"/>
        <end position="2032"/>
    </location>
</feature>
<feature type="transmembrane region" description="Helical" evidence="1">
    <location>
        <begin position="1310"/>
        <end position="1330"/>
    </location>
</feature>
<feature type="transmembrane region" description="Helical" evidence="1">
    <location>
        <begin position="1332"/>
        <end position="1352"/>
    </location>
</feature>
<feature type="transmembrane region" description="Helical" evidence="1">
    <location>
        <begin position="1374"/>
        <end position="1394"/>
    </location>
</feature>
<feature type="transmembrane region" description="Helical" evidence="1">
    <location>
        <begin position="1439"/>
        <end position="1459"/>
    </location>
</feature>
<feature type="transmembrane region" description="Helical" evidence="1">
    <location>
        <begin position="1535"/>
        <end position="1555"/>
    </location>
</feature>
<feature type="region of interest" description="Disordered" evidence="2">
    <location>
        <begin position="129"/>
        <end position="162"/>
    </location>
</feature>
<feature type="region of interest" description="Disordered" evidence="2">
    <location>
        <begin position="197"/>
        <end position="223"/>
    </location>
</feature>
<feature type="region of interest" description="Disordered" evidence="2">
    <location>
        <begin position="831"/>
        <end position="860"/>
    </location>
</feature>
<feature type="region of interest" description="Disordered" evidence="2">
    <location>
        <begin position="912"/>
        <end position="945"/>
    </location>
</feature>
<feature type="region of interest" description="Disordered" evidence="2">
    <location>
        <begin position="1120"/>
        <end position="1211"/>
    </location>
</feature>
<feature type="region of interest" description="Disordered" evidence="2">
    <location>
        <begin position="1753"/>
        <end position="1779"/>
    </location>
</feature>
<feature type="region of interest" description="Disordered" evidence="2">
    <location>
        <begin position="1853"/>
        <end position="1909"/>
    </location>
</feature>
<feature type="region of interest" description="Disordered" evidence="2">
    <location>
        <begin position="1935"/>
        <end position="1982"/>
    </location>
</feature>
<feature type="region of interest" description="Disordered" evidence="2">
    <location>
        <begin position="1999"/>
        <end position="2032"/>
    </location>
</feature>
<feature type="compositionally biased region" description="Basic residues" evidence="2">
    <location>
        <begin position="129"/>
        <end position="139"/>
    </location>
</feature>
<feature type="compositionally biased region" description="Polar residues" evidence="2">
    <location>
        <begin position="839"/>
        <end position="855"/>
    </location>
</feature>
<feature type="compositionally biased region" description="Polar residues" evidence="2">
    <location>
        <begin position="935"/>
        <end position="945"/>
    </location>
</feature>
<feature type="compositionally biased region" description="Polar residues" evidence="2">
    <location>
        <begin position="1120"/>
        <end position="1129"/>
    </location>
</feature>
<feature type="compositionally biased region" description="Low complexity" evidence="2">
    <location>
        <begin position="1130"/>
        <end position="1149"/>
    </location>
</feature>
<feature type="compositionally biased region" description="Polar residues" evidence="2">
    <location>
        <begin position="1171"/>
        <end position="1185"/>
    </location>
</feature>
<feature type="compositionally biased region" description="Acidic residues" evidence="2">
    <location>
        <begin position="1935"/>
        <end position="1947"/>
    </location>
</feature>
<feature type="compositionally biased region" description="Basic residues" evidence="2">
    <location>
        <begin position="1951"/>
        <end position="1962"/>
    </location>
</feature>
<feature type="compositionally biased region" description="Polar residues" evidence="2">
    <location>
        <begin position="2016"/>
        <end position="2032"/>
    </location>
</feature>
<feature type="mutagenesis site" description="In allele gon-2(dx22); gonadless phenotype." evidence="4">
    <original>G</original>
    <variation>R</variation>
    <location>
        <position position="427"/>
    </location>
</feature>
<feature type="mutagenesis site" description="In allele gon-2(dx58); gonadless phenotype." evidence="4">
    <original>S</original>
    <variation>N</variation>
    <location>
        <position position="603"/>
    </location>
</feature>
<feature type="mutagenesis site" description="In allele gon-2(q362); gonadless phenotype." evidence="4">
    <original>C</original>
    <variation>Y</variation>
    <location>
        <position position="656"/>
    </location>
</feature>
<feature type="mutagenesis site" description="In allele gon-2(q388); gonadless phenotype." evidence="4">
    <original>E</original>
    <variation>K</variation>
    <location>
        <position position="955"/>
    </location>
</feature>
<feature type="mutagenesis site" description="In allele gon-2(dx87); gonadless phenotype." evidence="4">
    <original>S</original>
    <variation>F</variation>
    <location>
        <position position="1566"/>
    </location>
</feature>
<name>TRPG_CAEEL</name>
<proteinExistence type="evidence at protein level"/>
<evidence type="ECO:0000255" key="1"/>
<evidence type="ECO:0000256" key="2">
    <source>
        <dbReference type="SAM" id="MobiDB-lite"/>
    </source>
</evidence>
<evidence type="ECO:0000269" key="3">
    <source>
    </source>
</evidence>
<evidence type="ECO:0000269" key="4">
    <source>
    </source>
</evidence>
<evidence type="ECO:0000303" key="5">
    <source>
    </source>
</evidence>
<evidence type="ECO:0000305" key="6"/>
<evidence type="ECO:0000312" key="7">
    <source>
        <dbReference type="EMBL" id="CAB02303.2"/>
    </source>
</evidence>
<gene>
    <name type="primary">gon-2</name>
    <name type="ORF">T01H8.5/T01H8.3/T01H8.4</name>
</gene>
<dbReference type="EMBL" id="Z80219">
    <property type="protein sequence ID" value="CAB02303.2"/>
    <property type="molecule type" value="Genomic_DNA"/>
</dbReference>
<dbReference type="EMBL" id="Z83117">
    <property type="protein sequence ID" value="CAB02303.2"/>
    <property type="status" value="JOINED"/>
    <property type="molecule type" value="Genomic_DNA"/>
</dbReference>
<dbReference type="PIR" id="T23707">
    <property type="entry name" value="T23707"/>
</dbReference>
<dbReference type="RefSeq" id="NP_492315.4">
    <property type="nucleotide sequence ID" value="NM_059914.5"/>
</dbReference>
<dbReference type="SMR" id="Q93971"/>
<dbReference type="BioGRID" id="38079">
    <property type="interactions" value="2"/>
</dbReference>
<dbReference type="FunCoup" id="Q93971">
    <property type="interactions" value="2340"/>
</dbReference>
<dbReference type="IntAct" id="Q93971">
    <property type="interactions" value="2"/>
</dbReference>
<dbReference type="STRING" id="6239.T01H8.5a.1"/>
<dbReference type="TCDB" id="1.A.4.5.10">
    <property type="family name" value="the transient receptor potential ca2+/cation channel (trp-cc) family"/>
</dbReference>
<dbReference type="iPTMnet" id="Q93971"/>
<dbReference type="PaxDb" id="6239-T01H8.5a"/>
<dbReference type="EnsemblMetazoa" id="T01H8.5a.1">
    <property type="protein sequence ID" value="T01H8.5a.1"/>
    <property type="gene ID" value="WBGene00001651"/>
</dbReference>
<dbReference type="GeneID" id="172646"/>
<dbReference type="KEGG" id="cel:CELE_T01H8.5"/>
<dbReference type="UCSC" id="T01H8.5a">
    <property type="organism name" value="c. elegans"/>
</dbReference>
<dbReference type="AGR" id="WB:WBGene00001651"/>
<dbReference type="CTD" id="172646"/>
<dbReference type="WormBase" id="T01H8.5a">
    <property type="protein sequence ID" value="CE30390"/>
    <property type="gene ID" value="WBGene00001651"/>
    <property type="gene designation" value="gon-2"/>
</dbReference>
<dbReference type="eggNOG" id="KOG3614">
    <property type="taxonomic scope" value="Eukaryota"/>
</dbReference>
<dbReference type="GeneTree" id="ENSGT00940000168570"/>
<dbReference type="InParanoid" id="Q93971"/>
<dbReference type="OMA" id="RVILACN"/>
<dbReference type="OrthoDB" id="301415at2759"/>
<dbReference type="PhylomeDB" id="Q93971"/>
<dbReference type="Reactome" id="R-CEL-3295583">
    <property type="pathway name" value="TRP channels"/>
</dbReference>
<dbReference type="PRO" id="PR:Q93971"/>
<dbReference type="Proteomes" id="UP000001940">
    <property type="component" value="Chromosome I"/>
</dbReference>
<dbReference type="Bgee" id="WBGene00001651">
    <property type="expression patterns" value="Expressed in embryo and 4 other cell types or tissues"/>
</dbReference>
<dbReference type="ExpressionAtlas" id="Q93971">
    <property type="expression patterns" value="baseline and differential"/>
</dbReference>
<dbReference type="GO" id="GO:0005886">
    <property type="term" value="C:plasma membrane"/>
    <property type="evidence" value="ECO:0000250"/>
    <property type="project" value="WormBase"/>
</dbReference>
<dbReference type="GO" id="GO:0005261">
    <property type="term" value="F:monoatomic cation channel activity"/>
    <property type="evidence" value="ECO:0000318"/>
    <property type="project" value="GO_Central"/>
</dbReference>
<dbReference type="GO" id="GO:0008324">
    <property type="term" value="F:monoatomic cation transmembrane transporter activity"/>
    <property type="evidence" value="ECO:0000250"/>
    <property type="project" value="WormBase"/>
</dbReference>
<dbReference type="GO" id="GO:0030421">
    <property type="term" value="P:defecation"/>
    <property type="evidence" value="ECO:0000315"/>
    <property type="project" value="WormBase"/>
</dbReference>
<dbReference type="GO" id="GO:0008406">
    <property type="term" value="P:gonad development"/>
    <property type="evidence" value="ECO:0000315"/>
    <property type="project" value="UniProtKB"/>
</dbReference>
<dbReference type="GO" id="GO:0030001">
    <property type="term" value="P:metal ion transport"/>
    <property type="evidence" value="ECO:0000318"/>
    <property type="project" value="GO_Central"/>
</dbReference>
<dbReference type="GO" id="GO:0000278">
    <property type="term" value="P:mitotic cell cycle"/>
    <property type="evidence" value="ECO:0000315"/>
    <property type="project" value="UniProtKB"/>
</dbReference>
<dbReference type="GO" id="GO:0098655">
    <property type="term" value="P:monoatomic cation transmembrane transport"/>
    <property type="evidence" value="ECO:0000318"/>
    <property type="project" value="GO_Central"/>
</dbReference>
<dbReference type="GO" id="GO:0006812">
    <property type="term" value="P:monoatomic cation transport"/>
    <property type="evidence" value="ECO:0000250"/>
    <property type="project" value="WormBase"/>
</dbReference>
<dbReference type="InterPro" id="IPR005821">
    <property type="entry name" value="Ion_trans_dom"/>
</dbReference>
<dbReference type="InterPro" id="IPR050927">
    <property type="entry name" value="TRPM"/>
</dbReference>
<dbReference type="InterPro" id="IPR041491">
    <property type="entry name" value="TRPM_SLOG"/>
</dbReference>
<dbReference type="PANTHER" id="PTHR13800">
    <property type="entry name" value="TRANSIENT RECEPTOR POTENTIAL CATION CHANNEL, SUBFAMILY M, MEMBER 6"/>
    <property type="match status" value="1"/>
</dbReference>
<dbReference type="PANTHER" id="PTHR13800:SF44">
    <property type="entry name" value="TRANSIENT RECEPTOR POTENTIAL CHANNEL"/>
    <property type="match status" value="1"/>
</dbReference>
<dbReference type="Pfam" id="PF00520">
    <property type="entry name" value="Ion_trans"/>
    <property type="match status" value="1"/>
</dbReference>
<dbReference type="Pfam" id="PF18139">
    <property type="entry name" value="LSDAT_euk"/>
    <property type="match status" value="1"/>
</dbReference>
<dbReference type="Pfam" id="PF25508">
    <property type="entry name" value="TRPM2"/>
    <property type="match status" value="2"/>
</dbReference>
<comment type="function">
    <text evidence="3 4 5">Required for initiation and continuation of postembryonic mitotic cell divisions of gonadal cells Z1 and Z4. Zygotic expression is necessary for hermaphrodite fertility. May be a cation channel.</text>
</comment>
<comment type="subcellular location">
    <subcellularLocation>
        <location evidence="6">Membrane</location>
        <topology evidence="6">Multi-pass membrane protein</topology>
    </subcellularLocation>
</comment>
<comment type="tissue specificity">
    <text evidence="4">Gonads.</text>
</comment>
<comment type="developmental stage">
    <text evidence="4">Expressed both maternally and zygotically during embryonic development. Zygotic expression starts during early embryonic cleavage.</text>
</comment>
<comment type="similarity">
    <text evidence="6">Belongs to the transient receptor (TC 1.A.4) family. LTrpC subfamily.</text>
</comment>
<protein>
    <recommendedName>
        <fullName>Transient receptor potential channel</fullName>
    </recommendedName>
    <alternativeName>
        <fullName>Abnormal gonad development protein 2</fullName>
    </alternativeName>
</protein>
<accession>Q93971</accession>
<accession>P91909</accession>
<reference evidence="6" key="1">
    <citation type="journal article" date="2001" name="Gene">
        <title>The C. elegans gon-2 gene encodes a putative TRP cation channel protein required for mitotic cell cycle progression.</title>
        <authorList>
            <person name="West R.J."/>
            <person name="Sun A.Y."/>
            <person name="Church D.L."/>
            <person name="Lambie E.J."/>
        </authorList>
    </citation>
    <scope>NUCLEOTIDE SEQUENCE [GENOMIC DNA]</scope>
    <scope>MUTANTS</scope>
</reference>
<reference key="2">
    <citation type="journal article" date="1998" name="Science">
        <title>Genome sequence of the nematode C. elegans: a platform for investigating biology.</title>
        <authorList>
            <consortium name="The C. elegans sequencing consortium"/>
        </authorList>
    </citation>
    <scope>NUCLEOTIDE SEQUENCE [LARGE SCALE GENOMIC DNA]</scope>
    <source>
        <strain>Bristol N2</strain>
    </source>
</reference>
<reference evidence="6" key="3">
    <citation type="journal article" date="1997" name="Genetics">
        <title>gon-2, a gene required for gonadogenesis in Caenorhabditis elegans.</title>
        <authorList>
            <person name="Sun A.Y."/>
            <person name="Lambie E.J."/>
        </authorList>
    </citation>
    <scope>FUNCTION</scope>
    <scope>MUTAGENESIS OF GLY-427; SER-603; CYS-656; GLU-955 AND SER-1566</scope>
    <source>
        <strain>Bristol N2</strain>
    </source>
</reference>
<sequence length="2032" mass="229063">MMSDDMLDENDENFACQDVDEIIIYVPEFAGYREVNIDTAVSVCPTPIQQARRESSCRNLEMRRRFEKLRREKKEEKKLLADDEKDFDEDDDVFEDGEGLQMRTFQPNASIRDENGSMPSLLPRTAPIKKTRKHRRRRSGSFTGGVYPRKGHRNRSLLGHAIPPPNVHSADWRDMLAITDNKDDKLMKTLGVTRYLQSKGGDQVPPTSTTTGGAGGDGNAVPTTSQAQAQTFNSGRQTTGMSSGDRLNEDVSATANSAQLVLPTPLFNQMRFTESNMSLNRHNWVRETFTRRECSRFIASSRDLHKCGCGRTRDAHRNIPELTSEFLRQKRSVAALEQQRSISNVNDDINTQNMYTKRGANEKWSLRKHTVSLATNAFGQVEFQGGPHPYKAQYVRVNFDTEPAYIMSLFEHVWQISPPRLIITVHGGTSNFDLQPKLARVFRKGLLKAASTTGAWIITSGCDTGVVKHVAAALEGAQSAQRNKIVCIGIAPWGLLKKREDFIGQDKTVPYYPSSSKGRFTGLNNRHSYFLLVDNGTVGRYGAEVILRKRLEMYISQKQKIFGGTRSVPVVCVVLEGGSCTIRSVLDYVTNVPRVPVVVCDGSGRAADLLAFAHQNVTEDGLLPDDIRRQVLLLVETTFGCSEAAAHRLLHELTVCAQHKNLLTIFRLGEQGEHDVDHAILTALLKGQNLSAADQLALALAWNRVDIARSDVFAMGHEWPQAALHNAMMEALIHDRVDFVRLLLEQGINMQKFLTISRLDELYNTDKGPPNTLFYIVRDVVRVRQGYRFKLPDIGLVIEKLMGNSYQCSYTTSEFRDKYKQRMKRVKHAQKKAMGVFSSRPSRTGSGIASRQSTEGMGGVGGGSSVAGVFGNSFGNQDPPLDPHVNRSALSGSRALSNHILWRSAFRGNFPANPMRPPNLGDSRDCGSEFDEELSLTSASDGSQTEPDFRYPYSELMIWAVLTKRQDMAMCMWQHGEEAMAKALVACRLYKSLATEAAEDYLEVEICEELKKYAEEFRILSLELLDHCYHVDDAQTLQLLTYELSNWSNETCLALAVIVNNKHFLAHPCCQILLADLWHGGLRMRTHSNIKVVLGLICPPFIQMLEFKTREELLNQPQTAAEHQNDMNYSSSSSSSSSSSSSSSSSDSSSFEDDDDENNAHNHDQKRTRKTSQGSAQSLNITSLFHSRRRKAKKNEKCDRETDASACEAGNRQIQNGGLTAEYGTFGESNGVSPPPPYMRANSRSRYNNRSDMSKTSSVIFGSDPNLSKLQKSNITSTDRPNPMEQFQGTRKIKMRRRFYEFYSAPISTFWSWTISFILFITFFTYTLLVKTPPRPTVIEYILIAYVAAFGLEQVRKIIMSDAKPFYEKIRTYVCSFWNCVTILAIIFYIVGFFMRCFGSVAYGRVILACDSVLWTMKLLDYMSVHPKLGPYVTMAGKMIQNMSYIIVMLVVTLLSFGLARQSITYPDETWHWILVRNIFLKPYFMLYGEVYADEIDTCGDEAWDQHLENGGPVILGNGTTGLSCVPGYWIPPLLMTFFLLIANILLMSMLIAIFNHIFDATDEMSQQIWLFQRYKQVMEYESTPFLPPPLTPLYHGVLILQFVRTRLSCSKSQERNPMFDFSLKLFLDNDQIEKLHDFEEDCMEDLARQKLNEKNTSNEQRILRADIRTDQILNRLIDLQAKESMGRDVINDVESRLASVEKAQNEILECVRALLNQNNAPTAIGRCFSPSPDPLVETANGTPGPLLLKLPGTDPILEEKDHDSGENSNSLPPGRIRRNRTATICGGYVSEERNMMLLSPKPSDVSGIPQQRLMSVTSMDPLPLPLAKLSTMSIRRRHEEYTSITDSIAIRHPERRIRNNRSNSSEHDESAVDSEGGGNVTSSPRKRSTRDLRMTPSSQVEESTSRDQIFEIDHPEHEEDEAQADCELTDVITEEEDEEEDDEEDDSHERHHIHPRRKSSRQNRQPSHTLETDLSEGEEVDPLDVLKMKELPIIHQILNEEEQAGAPHSTPVIASPSSSRADLTSQKCSDV</sequence>